<protein>
    <recommendedName>
        <fullName>Aromatase 2</fullName>
        <ecNumber evidence="2">1.14.14.14</ecNumber>
    </recommendedName>
    <alternativeName>
        <fullName>CYPXIXA2</fullName>
    </alternativeName>
    <alternativeName>
        <fullName>Cytochrome P-450AROM</fullName>
    </alternativeName>
    <alternativeName>
        <fullName>Cytochrome P450 19 type II</fullName>
    </alternativeName>
    <alternativeName>
        <fullName>Estrogen synthase</fullName>
    </alternativeName>
</protein>
<accession>P79430</accession>
<accession>O02847</accession>
<feature type="chain" id="PRO_0000051959" description="Aromatase 2">
    <location>
        <begin position="1"/>
        <end position="503"/>
    </location>
</feature>
<feature type="binding site" description="axial binding residue" evidence="1">
    <location>
        <position position="437"/>
    </location>
    <ligand>
        <name>heme</name>
        <dbReference type="ChEBI" id="CHEBI:30413"/>
    </ligand>
    <ligandPart>
        <name>Fe</name>
        <dbReference type="ChEBI" id="CHEBI:18248"/>
    </ligandPart>
</feature>
<feature type="sequence conflict" description="In Ref. 1; AAB51387." evidence="3" ref="1">
    <original>E</original>
    <variation>K</variation>
    <location>
        <position position="79"/>
    </location>
</feature>
<feature type="sequence conflict" description="In Ref. 1; AAB51387." evidence="3" ref="1">
    <original>D</original>
    <variation>E</variation>
    <location>
        <position position="502"/>
    </location>
</feature>
<gene>
    <name type="primary">CYP19A2</name>
</gene>
<name>CP192_PIG</name>
<evidence type="ECO:0000250" key="1"/>
<evidence type="ECO:0000250" key="2">
    <source>
        <dbReference type="UniProtKB" id="P11511"/>
    </source>
</evidence>
<evidence type="ECO:0000305" key="3"/>
<proteinExistence type="evidence at transcript level"/>
<reference key="1">
    <citation type="journal article" date="1995" name="Mol. Cell. Endocrinol.">
        <title>Functional ovarian and placental isoforms of porcine aromatase.</title>
        <authorList>
            <person name="Corbin C.J."/>
            <person name="Khalil M.W."/>
            <person name="Conley A.J."/>
        </authorList>
    </citation>
    <scope>NUCLEOTIDE SEQUENCE</scope>
    <source>
        <tissue>Placenta</tissue>
    </source>
</reference>
<reference key="2">
    <citation type="journal article" date="1997" name="DNA Cell Biol.">
        <title>Closely related genes encode developmental and tissue isoforms of porcine cytochrome P450 aromatase.</title>
        <authorList>
            <person name="Choi I."/>
            <person name="Troyer D.L."/>
            <person name="Cornwell D.L."/>
            <person name="Kirby-Dobbels K.R."/>
            <person name="Collante W.R."/>
            <person name="Simmen F.A."/>
        </authorList>
    </citation>
    <scope>NUCLEOTIDE SEQUENCE</scope>
    <source>
        <tissue>Liver</tissue>
        <tissue>Placenta</tissue>
    </source>
</reference>
<dbReference type="EC" id="1.14.14.14" evidence="2"/>
<dbReference type="EMBL" id="U92245">
    <property type="protein sequence ID" value="AAB51387.1"/>
    <property type="molecule type" value="mRNA"/>
</dbReference>
<dbReference type="EMBL" id="AH006583">
    <property type="protein sequence ID" value="AAC48732.1"/>
    <property type="molecule type" value="Genomic_DNA"/>
</dbReference>
<dbReference type="EMBL" id="U52142">
    <property type="protein sequence ID" value="AAB61697.1"/>
    <property type="molecule type" value="mRNA"/>
</dbReference>
<dbReference type="RefSeq" id="NP_999595.1">
    <property type="nucleotide sequence ID" value="NM_214430.1"/>
</dbReference>
<dbReference type="SMR" id="P79430"/>
<dbReference type="FunCoup" id="P79430">
    <property type="interactions" value="46"/>
</dbReference>
<dbReference type="PaxDb" id="9823-ENSSSCP00000025837"/>
<dbReference type="GeneID" id="403332"/>
<dbReference type="KEGG" id="ssc:403332"/>
<dbReference type="CTD" id="403332"/>
<dbReference type="eggNOG" id="KOG0157">
    <property type="taxonomic scope" value="Eukaryota"/>
</dbReference>
<dbReference type="InParanoid" id="P79430"/>
<dbReference type="OrthoDB" id="1470350at2759"/>
<dbReference type="Proteomes" id="UP000008227">
    <property type="component" value="Unplaced"/>
</dbReference>
<dbReference type="Proteomes" id="UP000314985">
    <property type="component" value="Unplaced"/>
</dbReference>
<dbReference type="Proteomes" id="UP000694570">
    <property type="component" value="Unplaced"/>
</dbReference>
<dbReference type="Proteomes" id="UP000694571">
    <property type="component" value="Unplaced"/>
</dbReference>
<dbReference type="Proteomes" id="UP000694720">
    <property type="component" value="Unplaced"/>
</dbReference>
<dbReference type="Proteomes" id="UP000694722">
    <property type="component" value="Unplaced"/>
</dbReference>
<dbReference type="Proteomes" id="UP000694723">
    <property type="component" value="Unplaced"/>
</dbReference>
<dbReference type="Proteomes" id="UP000694724">
    <property type="component" value="Unplaced"/>
</dbReference>
<dbReference type="Proteomes" id="UP000694725">
    <property type="component" value="Unplaced"/>
</dbReference>
<dbReference type="Proteomes" id="UP000694726">
    <property type="component" value="Unplaced"/>
</dbReference>
<dbReference type="Proteomes" id="UP000694727">
    <property type="component" value="Unplaced"/>
</dbReference>
<dbReference type="Proteomes" id="UP000694728">
    <property type="component" value="Unplaced"/>
</dbReference>
<dbReference type="GO" id="GO:0005783">
    <property type="term" value="C:endoplasmic reticulum"/>
    <property type="evidence" value="ECO:0000318"/>
    <property type="project" value="GO_Central"/>
</dbReference>
<dbReference type="GO" id="GO:0016020">
    <property type="term" value="C:membrane"/>
    <property type="evidence" value="ECO:0007669"/>
    <property type="project" value="UniProtKB-SubCell"/>
</dbReference>
<dbReference type="GO" id="GO:0070330">
    <property type="term" value="F:aromatase activity"/>
    <property type="evidence" value="ECO:0000318"/>
    <property type="project" value="GO_Central"/>
</dbReference>
<dbReference type="GO" id="GO:0020037">
    <property type="term" value="F:heme binding"/>
    <property type="evidence" value="ECO:0007669"/>
    <property type="project" value="InterPro"/>
</dbReference>
<dbReference type="GO" id="GO:0005506">
    <property type="term" value="F:iron ion binding"/>
    <property type="evidence" value="ECO:0007669"/>
    <property type="project" value="InterPro"/>
</dbReference>
<dbReference type="GO" id="GO:0008585">
    <property type="term" value="P:female gonad development"/>
    <property type="evidence" value="ECO:0000318"/>
    <property type="project" value="GO_Central"/>
</dbReference>
<dbReference type="GO" id="GO:0032355">
    <property type="term" value="P:response to estradiol"/>
    <property type="evidence" value="ECO:0000318"/>
    <property type="project" value="GO_Central"/>
</dbReference>
<dbReference type="CDD" id="cd20616">
    <property type="entry name" value="CYP19A1"/>
    <property type="match status" value="1"/>
</dbReference>
<dbReference type="FunFam" id="1.10.630.10:FF:000032">
    <property type="entry name" value="Cytochrome P450 aromatase"/>
    <property type="match status" value="1"/>
</dbReference>
<dbReference type="Gene3D" id="1.10.630.10">
    <property type="entry name" value="Cytochrome P450"/>
    <property type="match status" value="1"/>
</dbReference>
<dbReference type="InterPro" id="IPR001128">
    <property type="entry name" value="Cyt_P450"/>
</dbReference>
<dbReference type="InterPro" id="IPR017972">
    <property type="entry name" value="Cyt_P450_CS"/>
</dbReference>
<dbReference type="InterPro" id="IPR002401">
    <property type="entry name" value="Cyt_P450_E_grp-I"/>
</dbReference>
<dbReference type="InterPro" id="IPR036396">
    <property type="entry name" value="Cyt_P450_sf"/>
</dbReference>
<dbReference type="InterPro" id="IPR050196">
    <property type="entry name" value="Cytochrome_P450_Monoox"/>
</dbReference>
<dbReference type="PANTHER" id="PTHR24291:SF43">
    <property type="entry name" value="AROMATASE"/>
    <property type="match status" value="1"/>
</dbReference>
<dbReference type="PANTHER" id="PTHR24291">
    <property type="entry name" value="CYTOCHROME P450 FAMILY 4"/>
    <property type="match status" value="1"/>
</dbReference>
<dbReference type="Pfam" id="PF00067">
    <property type="entry name" value="p450"/>
    <property type="match status" value="1"/>
</dbReference>
<dbReference type="PRINTS" id="PR00463">
    <property type="entry name" value="EP450I"/>
</dbReference>
<dbReference type="PRINTS" id="PR00385">
    <property type="entry name" value="P450"/>
</dbReference>
<dbReference type="SUPFAM" id="SSF48264">
    <property type="entry name" value="Cytochrome P450"/>
    <property type="match status" value="1"/>
</dbReference>
<dbReference type="PROSITE" id="PS00086">
    <property type="entry name" value="CYTOCHROME_P450"/>
    <property type="match status" value="1"/>
</dbReference>
<comment type="function">
    <text>Catalyzes the formation of aromatic C18 estrogens from C19 androgens.</text>
</comment>
<comment type="catalytic activity">
    <reaction evidence="2">
        <text>testosterone + 3 reduced [NADPH--hemoprotein reductase] + 3 O2 = 17beta-estradiol + formate + 3 oxidized [NADPH--hemoprotein reductase] + 4 H2O + 4 H(+)</text>
        <dbReference type="Rhea" id="RHEA:38191"/>
        <dbReference type="Rhea" id="RHEA-COMP:11964"/>
        <dbReference type="Rhea" id="RHEA-COMP:11965"/>
        <dbReference type="ChEBI" id="CHEBI:15377"/>
        <dbReference type="ChEBI" id="CHEBI:15378"/>
        <dbReference type="ChEBI" id="CHEBI:15379"/>
        <dbReference type="ChEBI" id="CHEBI:15740"/>
        <dbReference type="ChEBI" id="CHEBI:16469"/>
        <dbReference type="ChEBI" id="CHEBI:17347"/>
        <dbReference type="ChEBI" id="CHEBI:57618"/>
        <dbReference type="ChEBI" id="CHEBI:58210"/>
        <dbReference type="EC" id="1.14.14.14"/>
    </reaction>
</comment>
<comment type="catalytic activity">
    <reaction evidence="2">
        <text>androst-4-ene-3,17-dione + 3 reduced [NADPH--hemoprotein reductase] + 3 O2 = estrone + formate + 3 oxidized [NADPH--hemoprotein reductase] + 4 H2O + 4 H(+)</text>
        <dbReference type="Rhea" id="RHEA:38195"/>
        <dbReference type="Rhea" id="RHEA-COMP:11964"/>
        <dbReference type="Rhea" id="RHEA-COMP:11965"/>
        <dbReference type="ChEBI" id="CHEBI:15377"/>
        <dbReference type="ChEBI" id="CHEBI:15378"/>
        <dbReference type="ChEBI" id="CHEBI:15379"/>
        <dbReference type="ChEBI" id="CHEBI:15740"/>
        <dbReference type="ChEBI" id="CHEBI:16422"/>
        <dbReference type="ChEBI" id="CHEBI:17263"/>
        <dbReference type="ChEBI" id="CHEBI:57618"/>
        <dbReference type="ChEBI" id="CHEBI:58210"/>
        <dbReference type="EC" id="1.14.14.14"/>
    </reaction>
</comment>
<comment type="cofactor">
    <cofactor evidence="1">
        <name>heme</name>
        <dbReference type="ChEBI" id="CHEBI:30413"/>
    </cofactor>
</comment>
<comment type="subcellular location">
    <subcellularLocation>
        <location>Membrane</location>
        <topology>Peripheral membrane protein</topology>
    </subcellularLocation>
</comment>
<comment type="similarity">
    <text evidence="3">Belongs to the cytochrome P450 family.</text>
</comment>
<organism>
    <name type="scientific">Sus scrofa</name>
    <name type="common">Pig</name>
    <dbReference type="NCBI Taxonomy" id="9823"/>
    <lineage>
        <taxon>Eukaryota</taxon>
        <taxon>Metazoa</taxon>
        <taxon>Chordata</taxon>
        <taxon>Craniata</taxon>
        <taxon>Vertebrata</taxon>
        <taxon>Euteleostomi</taxon>
        <taxon>Mammalia</taxon>
        <taxon>Eutheria</taxon>
        <taxon>Laurasiatheria</taxon>
        <taxon>Artiodactyla</taxon>
        <taxon>Suina</taxon>
        <taxon>Suidae</taxon>
        <taxon>Sus</taxon>
    </lineage>
</organism>
<sequence>MVLEMLNPMYYKITSMVSEVVPFASIAVLLLTGFLLLLWNYENTSSIPSPGYFLGIGPLISHFRFLWMGIGSACNYYNEMYGEFMRVWIGGEETLIISKSSSVFHVMKHSHYTSRFGSKPGLECIGMYEKGIIFNNDPALWKAVRTYFMKALSGPGLVRMVTVCADSITKHLDKLEEVRNDLGYVDVLTLMRRIMLDTSNNLFLGIPLDEKAIVCKIQGYFDAWQALLLKPEFFFKFSWLYKKHKESVKDLKENMEILIEKKRCSIITAEKLEDCMDFATELILAEKRGELTKENVNQCILEMLIAAPDTLSVTVFFMLFLIAKHPQVEEAIVKEIQTVIGERDIRNDDMQKLKVVENFIYESMRYQPVVDLVMRKALEDDVIDGYPVKKGTNIILNIGRMHRLEFFPKPNEFTLENFAKNVPYRYFQPFGFGPRACAGKYIAMVMMKVTLVILLRRFQVQTPQDRCVEKMQKKNDLSLHPDETSGLLEMIFIPRNSDKSLDH</sequence>
<keyword id="KW-0349">Heme</keyword>
<keyword id="KW-0408">Iron</keyword>
<keyword id="KW-0472">Membrane</keyword>
<keyword id="KW-0479">Metal-binding</keyword>
<keyword id="KW-0503">Monooxygenase</keyword>
<keyword id="KW-0560">Oxidoreductase</keyword>
<keyword id="KW-1185">Reference proteome</keyword>